<comment type="similarity">
    <text evidence="1">Belongs to the bacterial ribosomal protein bL36 family.</text>
</comment>
<sequence length="41" mass="4767">MKVVSSIKSAKKRHPACQVVRRRGKIYVINKVEPRYKARQG</sequence>
<organism>
    <name type="scientific">Opitutus terrae (strain DSM 11246 / JCM 15787 / PB90-1)</name>
    <dbReference type="NCBI Taxonomy" id="452637"/>
    <lineage>
        <taxon>Bacteria</taxon>
        <taxon>Pseudomonadati</taxon>
        <taxon>Verrucomicrobiota</taxon>
        <taxon>Opitutia</taxon>
        <taxon>Opitutales</taxon>
        <taxon>Opitutaceae</taxon>
        <taxon>Opitutus</taxon>
    </lineage>
</organism>
<protein>
    <recommendedName>
        <fullName evidence="1">Large ribosomal subunit protein bL36</fullName>
    </recommendedName>
    <alternativeName>
        <fullName evidence="2">50S ribosomal protein L36</fullName>
    </alternativeName>
</protein>
<name>RL36_OPITP</name>
<accession>B1ZWF5</accession>
<reference key="1">
    <citation type="journal article" date="2011" name="J. Bacteriol.">
        <title>Genome sequence of the verrucomicrobium Opitutus terrae PB90-1, an abundant inhabitant of rice paddy soil ecosystems.</title>
        <authorList>
            <person name="van Passel M.W."/>
            <person name="Kant R."/>
            <person name="Palva A."/>
            <person name="Copeland A."/>
            <person name="Lucas S."/>
            <person name="Lapidus A."/>
            <person name="Glavina del Rio T."/>
            <person name="Pitluck S."/>
            <person name="Goltsman E."/>
            <person name="Clum A."/>
            <person name="Sun H."/>
            <person name="Schmutz J."/>
            <person name="Larimer F.W."/>
            <person name="Land M.L."/>
            <person name="Hauser L."/>
            <person name="Kyrpides N."/>
            <person name="Mikhailova N."/>
            <person name="Richardson P.P."/>
            <person name="Janssen P.H."/>
            <person name="de Vos W.M."/>
            <person name="Smidt H."/>
        </authorList>
    </citation>
    <scope>NUCLEOTIDE SEQUENCE [LARGE SCALE GENOMIC DNA]</scope>
    <source>
        <strain>DSM 11246 / JCM 15787 / PB90-1</strain>
    </source>
</reference>
<feature type="chain" id="PRO_1000101051" description="Large ribosomal subunit protein bL36">
    <location>
        <begin position="1"/>
        <end position="41"/>
    </location>
</feature>
<keyword id="KW-1185">Reference proteome</keyword>
<keyword id="KW-0687">Ribonucleoprotein</keyword>
<keyword id="KW-0689">Ribosomal protein</keyword>
<proteinExistence type="inferred from homology"/>
<dbReference type="EMBL" id="CP001032">
    <property type="protein sequence ID" value="ACB76907.1"/>
    <property type="molecule type" value="Genomic_DNA"/>
</dbReference>
<dbReference type="RefSeq" id="WP_012376436.1">
    <property type="nucleotide sequence ID" value="NC_010571.1"/>
</dbReference>
<dbReference type="SMR" id="B1ZWF5"/>
<dbReference type="STRING" id="452637.Oter_3630"/>
<dbReference type="KEGG" id="ote:Oter_3630"/>
<dbReference type="eggNOG" id="COG0257">
    <property type="taxonomic scope" value="Bacteria"/>
</dbReference>
<dbReference type="HOGENOM" id="CLU_135723_3_2_0"/>
<dbReference type="OrthoDB" id="9802520at2"/>
<dbReference type="Proteomes" id="UP000007013">
    <property type="component" value="Chromosome"/>
</dbReference>
<dbReference type="GO" id="GO:1990904">
    <property type="term" value="C:ribonucleoprotein complex"/>
    <property type="evidence" value="ECO:0007669"/>
    <property type="project" value="UniProtKB-KW"/>
</dbReference>
<dbReference type="GO" id="GO:0005840">
    <property type="term" value="C:ribosome"/>
    <property type="evidence" value="ECO:0007669"/>
    <property type="project" value="UniProtKB-KW"/>
</dbReference>
<dbReference type="GO" id="GO:0003735">
    <property type="term" value="F:structural constituent of ribosome"/>
    <property type="evidence" value="ECO:0007669"/>
    <property type="project" value="InterPro"/>
</dbReference>
<dbReference type="GO" id="GO:0006412">
    <property type="term" value="P:translation"/>
    <property type="evidence" value="ECO:0007669"/>
    <property type="project" value="UniProtKB-UniRule"/>
</dbReference>
<dbReference type="HAMAP" id="MF_00251">
    <property type="entry name" value="Ribosomal_bL36"/>
    <property type="match status" value="1"/>
</dbReference>
<dbReference type="InterPro" id="IPR000473">
    <property type="entry name" value="Ribosomal_bL36"/>
</dbReference>
<dbReference type="InterPro" id="IPR035977">
    <property type="entry name" value="Ribosomal_bL36_sp"/>
</dbReference>
<dbReference type="InterPro" id="IPR047621">
    <property type="entry name" value="Ribosomal_L36_bact"/>
</dbReference>
<dbReference type="NCBIfam" id="NF002021">
    <property type="entry name" value="PRK00831.1"/>
    <property type="match status" value="1"/>
</dbReference>
<dbReference type="NCBIfam" id="TIGR01022">
    <property type="entry name" value="rpmJ_bact"/>
    <property type="match status" value="1"/>
</dbReference>
<dbReference type="PANTHER" id="PTHR47781">
    <property type="entry name" value="50S RIBOSOMAL PROTEIN L36 2"/>
    <property type="match status" value="1"/>
</dbReference>
<dbReference type="PANTHER" id="PTHR47781:SF1">
    <property type="entry name" value="LARGE RIBOSOMAL SUBUNIT PROTEIN BL36B"/>
    <property type="match status" value="1"/>
</dbReference>
<dbReference type="Pfam" id="PF00444">
    <property type="entry name" value="Ribosomal_L36"/>
    <property type="match status" value="1"/>
</dbReference>
<dbReference type="SUPFAM" id="SSF57840">
    <property type="entry name" value="Ribosomal protein L36"/>
    <property type="match status" value="1"/>
</dbReference>
<gene>
    <name evidence="1" type="primary">rpmJ</name>
    <name type="ordered locus">Oter_3630</name>
</gene>
<evidence type="ECO:0000255" key="1">
    <source>
        <dbReference type="HAMAP-Rule" id="MF_00251"/>
    </source>
</evidence>
<evidence type="ECO:0000305" key="2"/>